<feature type="chain" id="PRO_0000243544" description="Glutamate-1-semialdehyde 2,1-aminomutase 1">
    <location>
        <begin position="1"/>
        <end position="434"/>
    </location>
</feature>
<feature type="modified residue" description="N6-(pyridoxal phosphate)lysine" evidence="1">
    <location>
        <position position="268"/>
    </location>
</feature>
<reference key="1">
    <citation type="submission" date="2003-10" db="EMBL/GenBank/DDBJ databases">
        <title>The complete genome sequence of the alkaliphilic Bacillus clausii KSM-K16.</title>
        <authorList>
            <person name="Takaki Y."/>
            <person name="Kageyama Y."/>
            <person name="Shimamura S."/>
            <person name="Suzuki H."/>
            <person name="Nishi S."/>
            <person name="Hatada Y."/>
            <person name="Kawai S."/>
            <person name="Ito S."/>
            <person name="Horikoshi K."/>
        </authorList>
    </citation>
    <scope>NUCLEOTIDE SEQUENCE [LARGE SCALE GENOMIC DNA]</scope>
    <source>
        <strain>KSM-K16</strain>
    </source>
</reference>
<comment type="catalytic activity">
    <reaction evidence="1">
        <text>(S)-4-amino-5-oxopentanoate = 5-aminolevulinate</text>
        <dbReference type="Rhea" id="RHEA:14265"/>
        <dbReference type="ChEBI" id="CHEBI:57501"/>
        <dbReference type="ChEBI" id="CHEBI:356416"/>
        <dbReference type="EC" id="5.4.3.8"/>
    </reaction>
</comment>
<comment type="cofactor">
    <cofactor evidence="1">
        <name>pyridoxal 5'-phosphate</name>
        <dbReference type="ChEBI" id="CHEBI:597326"/>
    </cofactor>
</comment>
<comment type="pathway">
    <text evidence="1">Porphyrin-containing compound metabolism; protoporphyrin-IX biosynthesis; 5-aminolevulinate from L-glutamyl-tRNA(Glu): step 2/2.</text>
</comment>
<comment type="subunit">
    <text evidence="1">Homodimer.</text>
</comment>
<comment type="subcellular location">
    <subcellularLocation>
        <location evidence="1">Cytoplasm</location>
    </subcellularLocation>
</comment>
<comment type="similarity">
    <text evidence="1">Belongs to the class-III pyridoxal-phosphate-dependent aminotransferase family. HemL subfamily.</text>
</comment>
<evidence type="ECO:0000255" key="1">
    <source>
        <dbReference type="HAMAP-Rule" id="MF_00375"/>
    </source>
</evidence>
<sequence>MNRKTSESLYQEAQHVIVGGVNSPSRAYKGVGGGTPVFMERGEGAYFYDVDGNRYIDYLAAYGPIITGHAHPVITKAIQDQAAKGVLFGTPTRLENEFAQELTNAIPSLEKVRFVNSGTEAVMTTIRVARAYTGKEKIIKFAGCYHGHSDLVLVAAGSGPSTLGTPDSAGVTAATASEVITVPFNDIEAFKEALAHWGSETAAVLVEPIVGNFGIVEPEPGFLEAVNDLAHSAGALVIYDEVITAFRFMYGGAQDYLNVKPDMTALGKIIGGGLPIGAYGGRMDIMEQVAPLGPAYQAGTMAGNPASMSAGIACLEVLRTEGVYEKLDELGARLEEGLYLAAAKANVPISINRLKGALTVYFTDEPVIDYEGAKRSNGDQFSVFFKAMLNEGIHLAPSKYEAWFLTIAHTKNDIDETIEAAYRSFKTVAAGFYS</sequence>
<organism>
    <name type="scientific">Shouchella clausii (strain KSM-K16)</name>
    <name type="common">Alkalihalobacillus clausii</name>
    <dbReference type="NCBI Taxonomy" id="66692"/>
    <lineage>
        <taxon>Bacteria</taxon>
        <taxon>Bacillati</taxon>
        <taxon>Bacillota</taxon>
        <taxon>Bacilli</taxon>
        <taxon>Bacillales</taxon>
        <taxon>Bacillaceae</taxon>
        <taxon>Shouchella</taxon>
    </lineage>
</organism>
<gene>
    <name evidence="1" type="primary">hemL1</name>
    <name type="ordered locus">ABC1318</name>
</gene>
<accession>Q5WIE9</accession>
<name>GSA1_SHOC1</name>
<proteinExistence type="inferred from homology"/>
<dbReference type="EC" id="5.4.3.8" evidence="1"/>
<dbReference type="EMBL" id="AP006627">
    <property type="protein sequence ID" value="BAD63856.1"/>
    <property type="molecule type" value="Genomic_DNA"/>
</dbReference>
<dbReference type="RefSeq" id="WP_011246169.1">
    <property type="nucleotide sequence ID" value="NC_006582.1"/>
</dbReference>
<dbReference type="SMR" id="Q5WIE9"/>
<dbReference type="STRING" id="66692.ABC1318"/>
<dbReference type="KEGG" id="bcl:ABC1318"/>
<dbReference type="eggNOG" id="COG0001">
    <property type="taxonomic scope" value="Bacteria"/>
</dbReference>
<dbReference type="HOGENOM" id="CLU_016922_1_5_9"/>
<dbReference type="OrthoDB" id="9807885at2"/>
<dbReference type="UniPathway" id="UPA00251">
    <property type="reaction ID" value="UER00317"/>
</dbReference>
<dbReference type="Proteomes" id="UP000001168">
    <property type="component" value="Chromosome"/>
</dbReference>
<dbReference type="GO" id="GO:0005737">
    <property type="term" value="C:cytoplasm"/>
    <property type="evidence" value="ECO:0007669"/>
    <property type="project" value="UniProtKB-SubCell"/>
</dbReference>
<dbReference type="GO" id="GO:0042286">
    <property type="term" value="F:glutamate-1-semialdehyde 2,1-aminomutase activity"/>
    <property type="evidence" value="ECO:0007669"/>
    <property type="project" value="UniProtKB-UniRule"/>
</dbReference>
<dbReference type="GO" id="GO:0030170">
    <property type="term" value="F:pyridoxal phosphate binding"/>
    <property type="evidence" value="ECO:0007669"/>
    <property type="project" value="InterPro"/>
</dbReference>
<dbReference type="GO" id="GO:0008483">
    <property type="term" value="F:transaminase activity"/>
    <property type="evidence" value="ECO:0007669"/>
    <property type="project" value="InterPro"/>
</dbReference>
<dbReference type="GO" id="GO:0006782">
    <property type="term" value="P:protoporphyrinogen IX biosynthetic process"/>
    <property type="evidence" value="ECO:0007669"/>
    <property type="project" value="UniProtKB-UniRule"/>
</dbReference>
<dbReference type="CDD" id="cd00610">
    <property type="entry name" value="OAT_like"/>
    <property type="match status" value="1"/>
</dbReference>
<dbReference type="FunFam" id="3.40.640.10:FF:000021">
    <property type="entry name" value="Glutamate-1-semialdehyde 2,1-aminomutase"/>
    <property type="match status" value="1"/>
</dbReference>
<dbReference type="Gene3D" id="3.90.1150.10">
    <property type="entry name" value="Aspartate Aminotransferase, domain 1"/>
    <property type="match status" value="1"/>
</dbReference>
<dbReference type="Gene3D" id="3.40.640.10">
    <property type="entry name" value="Type I PLP-dependent aspartate aminotransferase-like (Major domain)"/>
    <property type="match status" value="1"/>
</dbReference>
<dbReference type="HAMAP" id="MF_00375">
    <property type="entry name" value="HemL_aminotrans_3"/>
    <property type="match status" value="1"/>
</dbReference>
<dbReference type="InterPro" id="IPR004639">
    <property type="entry name" value="4pyrrol_synth_GluAld_NH2Trfase"/>
</dbReference>
<dbReference type="InterPro" id="IPR005814">
    <property type="entry name" value="Aminotrans_3"/>
</dbReference>
<dbReference type="InterPro" id="IPR049704">
    <property type="entry name" value="Aminotrans_3_PPA_site"/>
</dbReference>
<dbReference type="InterPro" id="IPR015424">
    <property type="entry name" value="PyrdxlP-dep_Trfase"/>
</dbReference>
<dbReference type="InterPro" id="IPR015421">
    <property type="entry name" value="PyrdxlP-dep_Trfase_major"/>
</dbReference>
<dbReference type="InterPro" id="IPR015422">
    <property type="entry name" value="PyrdxlP-dep_Trfase_small"/>
</dbReference>
<dbReference type="NCBIfam" id="TIGR00713">
    <property type="entry name" value="hemL"/>
    <property type="match status" value="1"/>
</dbReference>
<dbReference type="NCBIfam" id="NF000818">
    <property type="entry name" value="PRK00062.1"/>
    <property type="match status" value="1"/>
</dbReference>
<dbReference type="NCBIfam" id="NF009055">
    <property type="entry name" value="PRK12389.1"/>
    <property type="match status" value="1"/>
</dbReference>
<dbReference type="PANTHER" id="PTHR43713">
    <property type="entry name" value="GLUTAMATE-1-SEMIALDEHYDE 2,1-AMINOMUTASE"/>
    <property type="match status" value="1"/>
</dbReference>
<dbReference type="PANTHER" id="PTHR43713:SF1">
    <property type="entry name" value="GLUTAMATE-1-SEMIALDEHYDE 2,1-AMINOMUTASE 2"/>
    <property type="match status" value="1"/>
</dbReference>
<dbReference type="Pfam" id="PF00202">
    <property type="entry name" value="Aminotran_3"/>
    <property type="match status" value="1"/>
</dbReference>
<dbReference type="SUPFAM" id="SSF53383">
    <property type="entry name" value="PLP-dependent transferases"/>
    <property type="match status" value="1"/>
</dbReference>
<dbReference type="PROSITE" id="PS00600">
    <property type="entry name" value="AA_TRANSFER_CLASS_3"/>
    <property type="match status" value="1"/>
</dbReference>
<protein>
    <recommendedName>
        <fullName evidence="1">Glutamate-1-semialdehyde 2,1-aminomutase 1</fullName>
        <shortName evidence="1">GSA 1</shortName>
        <ecNumber evidence="1">5.4.3.8</ecNumber>
    </recommendedName>
    <alternativeName>
        <fullName evidence="1">Glutamate-1-semialdehyde aminotransferase 1</fullName>
        <shortName evidence="1">GSA-AT 1</shortName>
    </alternativeName>
</protein>
<keyword id="KW-0963">Cytoplasm</keyword>
<keyword id="KW-0413">Isomerase</keyword>
<keyword id="KW-0627">Porphyrin biosynthesis</keyword>
<keyword id="KW-0663">Pyridoxal phosphate</keyword>
<keyword id="KW-1185">Reference proteome</keyword>